<sequence length="143" mass="16434">MFMGEYSHTLDVKGRLIIPAKFRNQLGEKFIVTRWMEHALRAMPMPVWEKLEQQLNQLPLGKKEARQFKRFVMAGAMEAEIDKQGRIIIPSNLKTYAGLAKNVIVTGSGDSFEIWSDENWQSYTAETAENFDDIAEGLVDFDF</sequence>
<dbReference type="EMBL" id="DQ489736">
    <property type="protein sequence ID" value="ACA82356.1"/>
    <property type="molecule type" value="Genomic_DNA"/>
</dbReference>
<dbReference type="RefSeq" id="WP_004900495.1">
    <property type="nucleotide sequence ID" value="NC_010471.1"/>
</dbReference>
<dbReference type="SMR" id="B1MXV4"/>
<dbReference type="STRING" id="349519.LCK_00523"/>
<dbReference type="GeneID" id="61102546"/>
<dbReference type="KEGG" id="lci:LCK_00523"/>
<dbReference type="eggNOG" id="COG2001">
    <property type="taxonomic scope" value="Bacteria"/>
</dbReference>
<dbReference type="HOGENOM" id="CLU_107907_0_5_9"/>
<dbReference type="OrthoDB" id="9807753at2"/>
<dbReference type="Proteomes" id="UP000002166">
    <property type="component" value="Chromosome"/>
</dbReference>
<dbReference type="GO" id="GO:0005737">
    <property type="term" value="C:cytoplasm"/>
    <property type="evidence" value="ECO:0007669"/>
    <property type="project" value="UniProtKB-UniRule"/>
</dbReference>
<dbReference type="GO" id="GO:0009295">
    <property type="term" value="C:nucleoid"/>
    <property type="evidence" value="ECO:0007669"/>
    <property type="project" value="UniProtKB-SubCell"/>
</dbReference>
<dbReference type="GO" id="GO:0003700">
    <property type="term" value="F:DNA-binding transcription factor activity"/>
    <property type="evidence" value="ECO:0007669"/>
    <property type="project" value="UniProtKB-UniRule"/>
</dbReference>
<dbReference type="GO" id="GO:0000976">
    <property type="term" value="F:transcription cis-regulatory region binding"/>
    <property type="evidence" value="ECO:0007669"/>
    <property type="project" value="TreeGrafter"/>
</dbReference>
<dbReference type="GO" id="GO:2000143">
    <property type="term" value="P:negative regulation of DNA-templated transcription initiation"/>
    <property type="evidence" value="ECO:0007669"/>
    <property type="project" value="TreeGrafter"/>
</dbReference>
<dbReference type="CDD" id="cd16321">
    <property type="entry name" value="MraZ_C"/>
    <property type="match status" value="1"/>
</dbReference>
<dbReference type="CDD" id="cd16320">
    <property type="entry name" value="MraZ_N"/>
    <property type="match status" value="1"/>
</dbReference>
<dbReference type="FunFam" id="3.40.1550.20:FF:000002">
    <property type="entry name" value="Transcriptional regulator MraZ"/>
    <property type="match status" value="1"/>
</dbReference>
<dbReference type="Gene3D" id="3.40.1550.20">
    <property type="entry name" value="Transcriptional regulator MraZ domain"/>
    <property type="match status" value="1"/>
</dbReference>
<dbReference type="HAMAP" id="MF_01008">
    <property type="entry name" value="MraZ"/>
    <property type="match status" value="1"/>
</dbReference>
<dbReference type="InterPro" id="IPR003444">
    <property type="entry name" value="MraZ"/>
</dbReference>
<dbReference type="InterPro" id="IPR035644">
    <property type="entry name" value="MraZ_C"/>
</dbReference>
<dbReference type="InterPro" id="IPR020603">
    <property type="entry name" value="MraZ_dom"/>
</dbReference>
<dbReference type="InterPro" id="IPR035642">
    <property type="entry name" value="MraZ_N"/>
</dbReference>
<dbReference type="InterPro" id="IPR038619">
    <property type="entry name" value="MraZ_sf"/>
</dbReference>
<dbReference type="InterPro" id="IPR007159">
    <property type="entry name" value="SpoVT-AbrB_dom"/>
</dbReference>
<dbReference type="InterPro" id="IPR037914">
    <property type="entry name" value="SpoVT-AbrB_sf"/>
</dbReference>
<dbReference type="NCBIfam" id="TIGR00242">
    <property type="entry name" value="division/cell wall cluster transcriptional repressor MraZ"/>
    <property type="match status" value="1"/>
</dbReference>
<dbReference type="PANTHER" id="PTHR34701">
    <property type="entry name" value="TRANSCRIPTIONAL REGULATOR MRAZ"/>
    <property type="match status" value="1"/>
</dbReference>
<dbReference type="PANTHER" id="PTHR34701:SF1">
    <property type="entry name" value="TRANSCRIPTIONAL REGULATOR MRAZ"/>
    <property type="match status" value="1"/>
</dbReference>
<dbReference type="Pfam" id="PF02381">
    <property type="entry name" value="MraZ"/>
    <property type="match status" value="2"/>
</dbReference>
<dbReference type="SUPFAM" id="SSF89447">
    <property type="entry name" value="AbrB/MazE/MraZ-like"/>
    <property type="match status" value="1"/>
</dbReference>
<dbReference type="PROSITE" id="PS51740">
    <property type="entry name" value="SPOVT_ABRB"/>
    <property type="match status" value="2"/>
</dbReference>
<proteinExistence type="inferred from homology"/>
<reference key="1">
    <citation type="journal article" date="2008" name="J. Bacteriol.">
        <title>Complete genome sequence of Leuconostoc citreum KM20.</title>
        <authorList>
            <person name="Kim J.F."/>
            <person name="Jeong H."/>
            <person name="Lee J.-S."/>
            <person name="Choi S.-H."/>
            <person name="Ha M."/>
            <person name="Hur C.-G."/>
            <person name="Kim J.-S."/>
            <person name="Lee S."/>
            <person name="Park H.-S."/>
            <person name="Park Y.-H."/>
            <person name="Oh T.K."/>
        </authorList>
    </citation>
    <scope>NUCLEOTIDE SEQUENCE [LARGE SCALE GENOMIC DNA]</scope>
    <source>
        <strain>KM20</strain>
    </source>
</reference>
<evidence type="ECO:0000255" key="1">
    <source>
        <dbReference type="HAMAP-Rule" id="MF_01008"/>
    </source>
</evidence>
<evidence type="ECO:0000255" key="2">
    <source>
        <dbReference type="PROSITE-ProRule" id="PRU01076"/>
    </source>
</evidence>
<organism>
    <name type="scientific">Leuconostoc citreum (strain KM20)</name>
    <dbReference type="NCBI Taxonomy" id="349519"/>
    <lineage>
        <taxon>Bacteria</taxon>
        <taxon>Bacillati</taxon>
        <taxon>Bacillota</taxon>
        <taxon>Bacilli</taxon>
        <taxon>Lactobacillales</taxon>
        <taxon>Lactobacillaceae</taxon>
        <taxon>Leuconostoc</taxon>
    </lineage>
</organism>
<keyword id="KW-0963">Cytoplasm</keyword>
<keyword id="KW-0238">DNA-binding</keyword>
<keyword id="KW-1185">Reference proteome</keyword>
<keyword id="KW-0677">Repeat</keyword>
<keyword id="KW-0804">Transcription</keyword>
<keyword id="KW-0805">Transcription regulation</keyword>
<comment type="subunit">
    <text evidence="1">Forms oligomers.</text>
</comment>
<comment type="subcellular location">
    <subcellularLocation>
        <location evidence="1">Cytoplasm</location>
        <location evidence="1">Nucleoid</location>
    </subcellularLocation>
</comment>
<comment type="similarity">
    <text evidence="1">Belongs to the MraZ family.</text>
</comment>
<gene>
    <name evidence="1" type="primary">mraZ</name>
    <name type="ordered locus">LCK_00523</name>
</gene>
<accession>B1MXV4</accession>
<name>MRAZ_LEUCK</name>
<feature type="chain" id="PRO_1000134809" description="Transcriptional regulator MraZ">
    <location>
        <begin position="1"/>
        <end position="143"/>
    </location>
</feature>
<feature type="domain" description="SpoVT-AbrB 1" evidence="2">
    <location>
        <begin position="5"/>
        <end position="47"/>
    </location>
</feature>
<feature type="domain" description="SpoVT-AbrB 2" evidence="2">
    <location>
        <begin position="76"/>
        <end position="119"/>
    </location>
</feature>
<protein>
    <recommendedName>
        <fullName>Transcriptional regulator MraZ</fullName>
    </recommendedName>
</protein>